<evidence type="ECO:0000250" key="1">
    <source>
        <dbReference type="UniProtKB" id="P32510"/>
    </source>
</evidence>
<evidence type="ECO:0000255" key="2"/>
<evidence type="ECO:0000305" key="3"/>
<feature type="chain" id="PRO_0000373395" description="Inner membrane protein p12">
    <location>
        <begin position="1"/>
        <end position="61"/>
    </location>
</feature>
<feature type="transmembrane region" description="Helical" evidence="2">
    <location>
        <begin position="16"/>
        <end position="36"/>
    </location>
</feature>
<gene>
    <name type="ordered locus">War-108</name>
</gene>
<organism>
    <name type="scientific">African swine fever virus (isolate Warthog/Namibia/Wart80/1980)</name>
    <name type="common">ASFV</name>
    <dbReference type="NCBI Taxonomy" id="561444"/>
    <lineage>
        <taxon>Viruses</taxon>
        <taxon>Varidnaviria</taxon>
        <taxon>Bamfordvirae</taxon>
        <taxon>Nucleocytoviricota</taxon>
        <taxon>Pokkesviricetes</taxon>
        <taxon>Asfuvirales</taxon>
        <taxon>Asfarviridae</taxon>
        <taxon>Asfivirus</taxon>
        <taxon>African swine fever virus</taxon>
    </lineage>
</organism>
<keyword id="KW-1015">Disulfide bond</keyword>
<keyword id="KW-0426">Late protein</keyword>
<keyword id="KW-0472">Membrane</keyword>
<keyword id="KW-0812">Transmembrane</keyword>
<keyword id="KW-1133">Transmembrane helix</keyword>
<keyword id="KW-0261">Viral envelope protein</keyword>
<keyword id="KW-0946">Virion</keyword>
<reference key="1">
    <citation type="submission" date="2003-03" db="EMBL/GenBank/DDBJ databases">
        <title>African swine fever virus genomes.</title>
        <authorList>
            <person name="Kutish G.F."/>
            <person name="Rock D.L."/>
        </authorList>
    </citation>
    <scope>NUCLEOTIDE SEQUENCE [LARGE SCALE GENOMIC DNA]</scope>
</reference>
<name>P12_ASFWA</name>
<accession>P0C9Y4</accession>
<proteinExistence type="inferred from homology"/>
<sequence length="61" mass="6679">MALDGSSGGGSNVETLLIVAIIVVIMAIMLYYFWWMPRQQKKCSKAEECTCNNGSCSLKTS</sequence>
<organismHost>
    <name type="scientific">Ornithodoros</name>
    <name type="common">relapsing fever ticks</name>
    <dbReference type="NCBI Taxonomy" id="6937"/>
</organismHost>
<organismHost>
    <name type="scientific">Phacochoerus aethiopicus</name>
    <name type="common">Warthog</name>
    <dbReference type="NCBI Taxonomy" id="85517"/>
</organismHost>
<organismHost>
    <name type="scientific">Phacochoerus africanus</name>
    <name type="common">Warthog</name>
    <dbReference type="NCBI Taxonomy" id="41426"/>
</organismHost>
<organismHost>
    <name type="scientific">Potamochoerus larvatus</name>
    <name type="common">Bushpig</name>
    <dbReference type="NCBI Taxonomy" id="273792"/>
</organismHost>
<organismHost>
    <name type="scientific">Sus scrofa</name>
    <name type="common">Pig</name>
    <dbReference type="NCBI Taxonomy" id="9823"/>
</organismHost>
<protein>
    <recommendedName>
        <fullName>Inner membrane protein p12</fullName>
    </recommendedName>
    <alternativeName>
        <fullName>Protein p12</fullName>
    </alternativeName>
</protein>
<comment type="subunit">
    <text evidence="1">Homomultimer; disulfide-linked.</text>
</comment>
<comment type="subcellular location">
    <subcellularLocation>
        <location evidence="1">Virion membrane</location>
        <topology evidence="3">Single-pass membrane protein</topology>
    </subcellularLocation>
    <text evidence="1">Part of the virion inner membrane.</text>
</comment>
<comment type="induction">
    <text evidence="3">Expressed in the late phase of the viral replicative cycle.</text>
</comment>
<comment type="PTM">
    <text evidence="1">Not glycosylated.</text>
</comment>
<comment type="similarity">
    <text evidence="3">Belongs to the asfivirus inner membrane protein p12 family.</text>
</comment>
<dbReference type="EMBL" id="AY261366">
    <property type="status" value="NOT_ANNOTATED_CDS"/>
    <property type="molecule type" value="Genomic_DNA"/>
</dbReference>
<dbReference type="SMR" id="P0C9Y4"/>
<dbReference type="Proteomes" id="UP000000858">
    <property type="component" value="Segment"/>
</dbReference>
<dbReference type="GO" id="GO:0016020">
    <property type="term" value="C:membrane"/>
    <property type="evidence" value="ECO:0007669"/>
    <property type="project" value="UniProtKB-KW"/>
</dbReference>
<dbReference type="GO" id="GO:0019031">
    <property type="term" value="C:viral envelope"/>
    <property type="evidence" value="ECO:0007669"/>
    <property type="project" value="UniProtKB-KW"/>
</dbReference>
<dbReference type="GO" id="GO:0055036">
    <property type="term" value="C:virion membrane"/>
    <property type="evidence" value="ECO:0007669"/>
    <property type="project" value="UniProtKB-SubCell"/>
</dbReference>